<name>DBP9_SCHPO</name>
<dbReference type="EC" id="3.6.4.13"/>
<dbReference type="EMBL" id="CU329672">
    <property type="protein sequence ID" value="CAA19304.1"/>
    <property type="molecule type" value="Genomic_DNA"/>
</dbReference>
<dbReference type="PIR" id="T41007">
    <property type="entry name" value="T41007"/>
</dbReference>
<dbReference type="RefSeq" id="NP_588531.1">
    <property type="nucleotide sequence ID" value="NM_001023519.2"/>
</dbReference>
<dbReference type="SMR" id="O60080"/>
<dbReference type="BioGRID" id="275358">
    <property type="interactions" value="3"/>
</dbReference>
<dbReference type="FunCoup" id="O60080">
    <property type="interactions" value="628"/>
</dbReference>
<dbReference type="STRING" id="284812.O60080"/>
<dbReference type="SwissPalm" id="O60080"/>
<dbReference type="PaxDb" id="4896-SPCC1494.06c.1"/>
<dbReference type="EnsemblFungi" id="SPCC1494.06c.1">
    <property type="protein sequence ID" value="SPCC1494.06c.1:pep"/>
    <property type="gene ID" value="SPCC1494.06c"/>
</dbReference>
<dbReference type="GeneID" id="2538776"/>
<dbReference type="KEGG" id="spo:2538776"/>
<dbReference type="PomBase" id="SPCC1494.06c">
    <property type="gene designation" value="dbp9"/>
</dbReference>
<dbReference type="VEuPathDB" id="FungiDB:SPCC1494.06c"/>
<dbReference type="eggNOG" id="KOG0346">
    <property type="taxonomic scope" value="Eukaryota"/>
</dbReference>
<dbReference type="HOGENOM" id="CLU_003041_17_1_1"/>
<dbReference type="InParanoid" id="O60080"/>
<dbReference type="OMA" id="SRCHVIN"/>
<dbReference type="PhylomeDB" id="O60080"/>
<dbReference type="PRO" id="PR:O60080"/>
<dbReference type="Proteomes" id="UP000002485">
    <property type="component" value="Chromosome III"/>
</dbReference>
<dbReference type="GO" id="GO:0005829">
    <property type="term" value="C:cytosol"/>
    <property type="evidence" value="ECO:0007005"/>
    <property type="project" value="PomBase"/>
</dbReference>
<dbReference type="GO" id="GO:0005730">
    <property type="term" value="C:nucleolus"/>
    <property type="evidence" value="ECO:0007005"/>
    <property type="project" value="PomBase"/>
</dbReference>
<dbReference type="GO" id="GO:0005524">
    <property type="term" value="F:ATP binding"/>
    <property type="evidence" value="ECO:0007669"/>
    <property type="project" value="UniProtKB-KW"/>
</dbReference>
<dbReference type="GO" id="GO:0016887">
    <property type="term" value="F:ATP hydrolysis activity"/>
    <property type="evidence" value="ECO:0007669"/>
    <property type="project" value="RHEA"/>
</dbReference>
<dbReference type="GO" id="GO:0003723">
    <property type="term" value="F:RNA binding"/>
    <property type="evidence" value="ECO:0007669"/>
    <property type="project" value="UniProtKB-KW"/>
</dbReference>
<dbReference type="GO" id="GO:0003724">
    <property type="term" value="F:RNA helicase activity"/>
    <property type="evidence" value="ECO:0000266"/>
    <property type="project" value="PomBase"/>
</dbReference>
<dbReference type="GO" id="GO:0006364">
    <property type="term" value="P:rRNA processing"/>
    <property type="evidence" value="ECO:0000266"/>
    <property type="project" value="PomBase"/>
</dbReference>
<dbReference type="CDD" id="cd17961">
    <property type="entry name" value="DEADc_DDX56"/>
    <property type="match status" value="1"/>
</dbReference>
<dbReference type="CDD" id="cd18787">
    <property type="entry name" value="SF2_C_DEAD"/>
    <property type="match status" value="1"/>
</dbReference>
<dbReference type="Gene3D" id="3.40.50.300">
    <property type="entry name" value="P-loop containing nucleotide triphosphate hydrolases"/>
    <property type="match status" value="2"/>
</dbReference>
<dbReference type="InterPro" id="IPR011545">
    <property type="entry name" value="DEAD/DEAH_box_helicase_dom"/>
</dbReference>
<dbReference type="InterPro" id="IPR050079">
    <property type="entry name" value="DEAD_box_RNA_helicase"/>
</dbReference>
<dbReference type="InterPro" id="IPR014001">
    <property type="entry name" value="Helicase_ATP-bd"/>
</dbReference>
<dbReference type="InterPro" id="IPR001650">
    <property type="entry name" value="Helicase_C-like"/>
</dbReference>
<dbReference type="InterPro" id="IPR027417">
    <property type="entry name" value="P-loop_NTPase"/>
</dbReference>
<dbReference type="InterPro" id="IPR014014">
    <property type="entry name" value="RNA_helicase_DEAD_Q_motif"/>
</dbReference>
<dbReference type="PANTHER" id="PTHR47959">
    <property type="entry name" value="ATP-DEPENDENT RNA HELICASE RHLE-RELATED"/>
    <property type="match status" value="1"/>
</dbReference>
<dbReference type="PANTHER" id="PTHR47959:SF21">
    <property type="entry name" value="DEAD-BOX HELICASE 56"/>
    <property type="match status" value="1"/>
</dbReference>
<dbReference type="Pfam" id="PF00270">
    <property type="entry name" value="DEAD"/>
    <property type="match status" value="1"/>
</dbReference>
<dbReference type="Pfam" id="PF00271">
    <property type="entry name" value="Helicase_C"/>
    <property type="match status" value="2"/>
</dbReference>
<dbReference type="SMART" id="SM00487">
    <property type="entry name" value="DEXDc"/>
    <property type="match status" value="1"/>
</dbReference>
<dbReference type="SMART" id="SM00490">
    <property type="entry name" value="HELICc"/>
    <property type="match status" value="1"/>
</dbReference>
<dbReference type="SUPFAM" id="SSF52540">
    <property type="entry name" value="P-loop containing nucleoside triphosphate hydrolases"/>
    <property type="match status" value="2"/>
</dbReference>
<dbReference type="PROSITE" id="PS51192">
    <property type="entry name" value="HELICASE_ATP_BIND_1"/>
    <property type="match status" value="1"/>
</dbReference>
<dbReference type="PROSITE" id="PS51194">
    <property type="entry name" value="HELICASE_CTER"/>
    <property type="match status" value="1"/>
</dbReference>
<dbReference type="PROSITE" id="PS51195">
    <property type="entry name" value="Q_MOTIF"/>
    <property type="match status" value="1"/>
</dbReference>
<reference key="1">
    <citation type="journal article" date="2002" name="Nature">
        <title>The genome sequence of Schizosaccharomyces pombe.</title>
        <authorList>
            <person name="Wood V."/>
            <person name="Gwilliam R."/>
            <person name="Rajandream M.A."/>
            <person name="Lyne M.H."/>
            <person name="Lyne R."/>
            <person name="Stewart A."/>
            <person name="Sgouros J.G."/>
            <person name="Peat N."/>
            <person name="Hayles J."/>
            <person name="Baker S.G."/>
            <person name="Basham D."/>
            <person name="Bowman S."/>
            <person name="Brooks K."/>
            <person name="Brown D."/>
            <person name="Brown S."/>
            <person name="Chillingworth T."/>
            <person name="Churcher C.M."/>
            <person name="Collins M."/>
            <person name="Connor R."/>
            <person name="Cronin A."/>
            <person name="Davis P."/>
            <person name="Feltwell T."/>
            <person name="Fraser A."/>
            <person name="Gentles S."/>
            <person name="Goble A."/>
            <person name="Hamlin N."/>
            <person name="Harris D.E."/>
            <person name="Hidalgo J."/>
            <person name="Hodgson G."/>
            <person name="Holroyd S."/>
            <person name="Hornsby T."/>
            <person name="Howarth S."/>
            <person name="Huckle E.J."/>
            <person name="Hunt S."/>
            <person name="Jagels K."/>
            <person name="James K.D."/>
            <person name="Jones L."/>
            <person name="Jones M."/>
            <person name="Leather S."/>
            <person name="McDonald S."/>
            <person name="McLean J."/>
            <person name="Mooney P."/>
            <person name="Moule S."/>
            <person name="Mungall K.L."/>
            <person name="Murphy L.D."/>
            <person name="Niblett D."/>
            <person name="Odell C."/>
            <person name="Oliver K."/>
            <person name="O'Neil S."/>
            <person name="Pearson D."/>
            <person name="Quail M.A."/>
            <person name="Rabbinowitsch E."/>
            <person name="Rutherford K.M."/>
            <person name="Rutter S."/>
            <person name="Saunders D."/>
            <person name="Seeger K."/>
            <person name="Sharp S."/>
            <person name="Skelton J."/>
            <person name="Simmonds M.N."/>
            <person name="Squares R."/>
            <person name="Squares S."/>
            <person name="Stevens K."/>
            <person name="Taylor K."/>
            <person name="Taylor R.G."/>
            <person name="Tivey A."/>
            <person name="Walsh S.V."/>
            <person name="Warren T."/>
            <person name="Whitehead S."/>
            <person name="Woodward J.R."/>
            <person name="Volckaert G."/>
            <person name="Aert R."/>
            <person name="Robben J."/>
            <person name="Grymonprez B."/>
            <person name="Weltjens I."/>
            <person name="Vanstreels E."/>
            <person name="Rieger M."/>
            <person name="Schaefer M."/>
            <person name="Mueller-Auer S."/>
            <person name="Gabel C."/>
            <person name="Fuchs M."/>
            <person name="Duesterhoeft A."/>
            <person name="Fritzc C."/>
            <person name="Holzer E."/>
            <person name="Moestl D."/>
            <person name="Hilbert H."/>
            <person name="Borzym K."/>
            <person name="Langer I."/>
            <person name="Beck A."/>
            <person name="Lehrach H."/>
            <person name="Reinhardt R."/>
            <person name="Pohl T.M."/>
            <person name="Eger P."/>
            <person name="Zimmermann W."/>
            <person name="Wedler H."/>
            <person name="Wambutt R."/>
            <person name="Purnelle B."/>
            <person name="Goffeau A."/>
            <person name="Cadieu E."/>
            <person name="Dreano S."/>
            <person name="Gloux S."/>
            <person name="Lelaure V."/>
            <person name="Mottier S."/>
            <person name="Galibert F."/>
            <person name="Aves S.J."/>
            <person name="Xiang Z."/>
            <person name="Hunt C."/>
            <person name="Moore K."/>
            <person name="Hurst S.M."/>
            <person name="Lucas M."/>
            <person name="Rochet M."/>
            <person name="Gaillardin C."/>
            <person name="Tallada V.A."/>
            <person name="Garzon A."/>
            <person name="Thode G."/>
            <person name="Daga R.R."/>
            <person name="Cruzado L."/>
            <person name="Jimenez J."/>
            <person name="Sanchez M."/>
            <person name="del Rey F."/>
            <person name="Benito J."/>
            <person name="Dominguez A."/>
            <person name="Revuelta J.L."/>
            <person name="Moreno S."/>
            <person name="Armstrong J."/>
            <person name="Forsburg S.L."/>
            <person name="Cerutti L."/>
            <person name="Lowe T."/>
            <person name="McCombie W.R."/>
            <person name="Paulsen I."/>
            <person name="Potashkin J."/>
            <person name="Shpakovski G.V."/>
            <person name="Ussery D."/>
            <person name="Barrell B.G."/>
            <person name="Nurse P."/>
        </authorList>
    </citation>
    <scope>NUCLEOTIDE SEQUENCE [LARGE SCALE GENOMIC DNA]</scope>
    <source>
        <strain>972 / ATCC 24843</strain>
    </source>
</reference>
<sequence>MEKSGGIREESSEKTFSDFNLDPRLQRAIHKCEFEKPTSVQSETIPLALEGKDLVAQARTGSGKTAAYLIPILELLLKQKQIDENQRGIFALLLVPTRELAQQVYNVLEKLTAFCSKHIRFINVATNSSDTVQRPLLLDLPDIVIATPSRCVVHVASGVLPLDKLKFLVIDEADLMLSFGYNEDMKTLSRSLPRGTQSFLMSATLSKNIASLQKLVCRNPFILAVKDKEASGKLTQYVVKCSEQDKFLLAYILLKLRLIKGKILIFVNEINRCYRLKLFLEQFGLKSLVLNSELPVNSRLHILEQYNKGLYQIIIATDESGMMGEIEELENNVDFVEEEVISTDQPTLDKMKDQENADVNDESILAAAKDKSKKKKRVKQDKEYGVARGLDFENVACVLNFDMPSNTKSYIHRIGRTARAGKPGTAMSFVVPKSEVGKHKPTSLESCKKDESVLRRLEKKQISLQPYSFDKNQIDAFRYRMEDALRAVTTVAVSAARAAELKQELLISEKLKSYFAENPDELLSLTHDTVSSVRLGHTQRHLRHVPEYLLPKGMQAVNKDIGFVPFKKNNRRKVFKSRKNPKHRHDPLRSMKRKS</sequence>
<organism>
    <name type="scientific">Schizosaccharomyces pombe (strain 972 / ATCC 24843)</name>
    <name type="common">Fission yeast</name>
    <dbReference type="NCBI Taxonomy" id="284812"/>
    <lineage>
        <taxon>Eukaryota</taxon>
        <taxon>Fungi</taxon>
        <taxon>Dikarya</taxon>
        <taxon>Ascomycota</taxon>
        <taxon>Taphrinomycotina</taxon>
        <taxon>Schizosaccharomycetes</taxon>
        <taxon>Schizosaccharomycetales</taxon>
        <taxon>Schizosaccharomycetaceae</taxon>
        <taxon>Schizosaccharomyces</taxon>
    </lineage>
</organism>
<comment type="function">
    <text evidence="1">ATP-binding RNA helicase involved in the biogenesis of 60S ribosomal subunits and is required for the normal formation of 25S and 5.8S rRNAs.</text>
</comment>
<comment type="catalytic activity">
    <reaction>
        <text>ATP + H2O = ADP + phosphate + H(+)</text>
        <dbReference type="Rhea" id="RHEA:13065"/>
        <dbReference type="ChEBI" id="CHEBI:15377"/>
        <dbReference type="ChEBI" id="CHEBI:15378"/>
        <dbReference type="ChEBI" id="CHEBI:30616"/>
        <dbReference type="ChEBI" id="CHEBI:43474"/>
        <dbReference type="ChEBI" id="CHEBI:456216"/>
        <dbReference type="EC" id="3.6.4.13"/>
    </reaction>
</comment>
<comment type="subcellular location">
    <subcellularLocation>
        <location evidence="1">Nucleus</location>
        <location evidence="1">Nucleolus</location>
    </subcellularLocation>
</comment>
<comment type="domain">
    <text>The Q motif is unique to and characteristic of the DEAD box family of RNA helicases and controls ATP binding and hydrolysis.</text>
</comment>
<comment type="similarity">
    <text evidence="5">Belongs to the DEAD box helicase family. DDX56/DBP9 subfamily.</text>
</comment>
<accession>O60080</accession>
<gene>
    <name type="primary">dbp9</name>
    <name type="ORF">SPCC1494.06c</name>
</gene>
<keyword id="KW-0067">ATP-binding</keyword>
<keyword id="KW-0347">Helicase</keyword>
<keyword id="KW-0378">Hydrolase</keyword>
<keyword id="KW-0547">Nucleotide-binding</keyword>
<keyword id="KW-0539">Nucleus</keyword>
<keyword id="KW-1185">Reference proteome</keyword>
<keyword id="KW-0690">Ribosome biogenesis</keyword>
<keyword id="KW-0694">RNA-binding</keyword>
<keyword id="KW-0698">rRNA processing</keyword>
<proteinExistence type="inferred from homology"/>
<feature type="chain" id="PRO_0000232345" description="ATP-dependent RNA helicase dbp9">
    <location>
        <begin position="1"/>
        <end position="595"/>
    </location>
</feature>
<feature type="domain" description="Helicase ATP-binding" evidence="2">
    <location>
        <begin position="45"/>
        <end position="223"/>
    </location>
</feature>
<feature type="domain" description="Helicase C-terminal" evidence="3">
    <location>
        <begin position="233"/>
        <end position="485"/>
    </location>
</feature>
<feature type="region of interest" description="Disordered" evidence="4">
    <location>
        <begin position="574"/>
        <end position="595"/>
    </location>
</feature>
<feature type="short sequence motif" description="Q motif">
    <location>
        <begin position="14"/>
        <end position="42"/>
    </location>
</feature>
<feature type="short sequence motif" description="DEAD box">
    <location>
        <begin position="171"/>
        <end position="174"/>
    </location>
</feature>
<feature type="binding site" evidence="2">
    <location>
        <begin position="58"/>
        <end position="65"/>
    </location>
    <ligand>
        <name>ATP</name>
        <dbReference type="ChEBI" id="CHEBI:30616"/>
    </ligand>
</feature>
<evidence type="ECO:0000250" key="1"/>
<evidence type="ECO:0000255" key="2">
    <source>
        <dbReference type="PROSITE-ProRule" id="PRU00541"/>
    </source>
</evidence>
<evidence type="ECO:0000255" key="3">
    <source>
        <dbReference type="PROSITE-ProRule" id="PRU00542"/>
    </source>
</evidence>
<evidence type="ECO:0000256" key="4">
    <source>
        <dbReference type="SAM" id="MobiDB-lite"/>
    </source>
</evidence>
<evidence type="ECO:0000305" key="5"/>
<protein>
    <recommendedName>
        <fullName>ATP-dependent RNA helicase dbp9</fullName>
        <ecNumber>3.6.4.13</ecNumber>
    </recommendedName>
</protein>